<evidence type="ECO:0000255" key="1"/>
<evidence type="ECO:0000255" key="2">
    <source>
        <dbReference type="PROSITE-ProRule" id="PRU00175"/>
    </source>
</evidence>
<evidence type="ECO:0000255" key="3">
    <source>
        <dbReference type="PROSITE-ProRule" id="PRU00498"/>
    </source>
</evidence>
<evidence type="ECO:0000256" key="4">
    <source>
        <dbReference type="SAM" id="MobiDB-lite"/>
    </source>
</evidence>
<evidence type="ECO:0000269" key="5">
    <source>
    </source>
</evidence>
<evidence type="ECO:0000303" key="6">
    <source>
    </source>
</evidence>
<evidence type="ECO:0000305" key="7"/>
<evidence type="ECO:0000305" key="8">
    <source>
    </source>
</evidence>
<protein>
    <recommendedName>
        <fullName evidence="6">DSC E3 ubiquitin ligase complex subunit A</fullName>
        <ecNumber evidence="8">2.3.2.27</ecNumber>
    </recommendedName>
    <alternativeName>
        <fullName>Defective for SREBP cleavage protein A</fullName>
    </alternativeName>
    <alternativeName>
        <fullName evidence="6">RING-type E3 ubiquitin transferase dscA</fullName>
    </alternativeName>
</protein>
<sequence length="802" mass="90121">MDNRGSFFFLLIVFYLLLSSQSRPPLLDQDRERQREVARERDALRLLNESKYGDFDPPGDKWLPFAGTRKNDSYAWGILPEAQGRARHQLRSAISNAGLEPPRSLEDPDALPSLNLTQLLLPVYRNATGKLRGDWVRRKLNKEYPKLNTTAIALEHGYFTHEFGLNITGSSGTFYLDLREGGGEELRVDSGQVREIRATLAVESNDFWGNTWYISLFGVHFPETGAIILSSNSEKFEGLFVLPHLAFSSDAYELSHQLLLNSLSDTLSEKENRPPTLFPWSSLIGSEQVEFPAPKCEHIIYLQQHPVTIHDYLADKPVVDQIEEELRFPIGAPVPPAPLMVMSAVVFSPDCGYILETKGTPDFPPSEGLYLTGPKIEEYDKYSARLVFIICGVFAAQITLLLRQIKEASTPSTRSRISFYTIALMAFGDAFVLIFILLELYPAVSFLVMATAAFLTFLSVSYIGMKFMMEIWAVQAPERREQERRSNPPASTPRSTGLPLPATSAPVRDSGATPIILTPDQDPPAEEDDQPTNRGTTSAAQETRNDVGAMYARFYFVLFVMLIISIWSFLWPNRLGALYARALAFVYLSFWTPQIGRNIIRNCRKALRWDFVIGQSILRLFPFVYFLTVRGNVLFIHPDTTTAFALAGWVWIQVWVLASQDILGPRFFVPRGWAPAAYDYHPILRDGDESEADLESGGVLPIGALRAEDLSGDAKDEDKQRTKDRKRAVFDCAICMQEIEVPVLAARGSAGGSSVTEGATSILSRRTYMVTPCRHIFHSTCLESWMRLRLQCPICRESIPPV</sequence>
<reference key="1">
    <citation type="journal article" date="2005" name="Nature">
        <title>Genomic sequence of the pathogenic and allergenic filamentous fungus Aspergillus fumigatus.</title>
        <authorList>
            <person name="Nierman W.C."/>
            <person name="Pain A."/>
            <person name="Anderson M.J."/>
            <person name="Wortman J.R."/>
            <person name="Kim H.S."/>
            <person name="Arroyo J."/>
            <person name="Berriman M."/>
            <person name="Abe K."/>
            <person name="Archer D.B."/>
            <person name="Bermejo C."/>
            <person name="Bennett J.W."/>
            <person name="Bowyer P."/>
            <person name="Chen D."/>
            <person name="Collins M."/>
            <person name="Coulsen R."/>
            <person name="Davies R."/>
            <person name="Dyer P.S."/>
            <person name="Farman M.L."/>
            <person name="Fedorova N."/>
            <person name="Fedorova N.D."/>
            <person name="Feldblyum T.V."/>
            <person name="Fischer R."/>
            <person name="Fosker N."/>
            <person name="Fraser A."/>
            <person name="Garcia J.L."/>
            <person name="Garcia M.J."/>
            <person name="Goble A."/>
            <person name="Goldman G.H."/>
            <person name="Gomi K."/>
            <person name="Griffith-Jones S."/>
            <person name="Gwilliam R."/>
            <person name="Haas B.J."/>
            <person name="Haas H."/>
            <person name="Harris D.E."/>
            <person name="Horiuchi H."/>
            <person name="Huang J."/>
            <person name="Humphray S."/>
            <person name="Jimenez J."/>
            <person name="Keller N."/>
            <person name="Khouri H."/>
            <person name="Kitamoto K."/>
            <person name="Kobayashi T."/>
            <person name="Konzack S."/>
            <person name="Kulkarni R."/>
            <person name="Kumagai T."/>
            <person name="Lafton A."/>
            <person name="Latge J.-P."/>
            <person name="Li W."/>
            <person name="Lord A."/>
            <person name="Lu C."/>
            <person name="Majoros W.H."/>
            <person name="May G.S."/>
            <person name="Miller B.L."/>
            <person name="Mohamoud Y."/>
            <person name="Molina M."/>
            <person name="Monod M."/>
            <person name="Mouyna I."/>
            <person name="Mulligan S."/>
            <person name="Murphy L.D."/>
            <person name="O'Neil S."/>
            <person name="Paulsen I."/>
            <person name="Penalva M.A."/>
            <person name="Pertea M."/>
            <person name="Price C."/>
            <person name="Pritchard B.L."/>
            <person name="Quail M.A."/>
            <person name="Rabbinowitsch E."/>
            <person name="Rawlins N."/>
            <person name="Rajandream M.A."/>
            <person name="Reichard U."/>
            <person name="Renauld H."/>
            <person name="Robson G.D."/>
            <person name="Rodriguez de Cordoba S."/>
            <person name="Rodriguez-Pena J.M."/>
            <person name="Ronning C.M."/>
            <person name="Rutter S."/>
            <person name="Salzberg S.L."/>
            <person name="Sanchez M."/>
            <person name="Sanchez-Ferrero J.C."/>
            <person name="Saunders D."/>
            <person name="Seeger K."/>
            <person name="Squares R."/>
            <person name="Squares S."/>
            <person name="Takeuchi M."/>
            <person name="Tekaia F."/>
            <person name="Turner G."/>
            <person name="Vazquez de Aldana C.R."/>
            <person name="Weidman J."/>
            <person name="White O."/>
            <person name="Woodward J.R."/>
            <person name="Yu J.-H."/>
            <person name="Fraser C.M."/>
            <person name="Galagan J.E."/>
            <person name="Asai K."/>
            <person name="Machida M."/>
            <person name="Hall N."/>
            <person name="Barrell B.G."/>
            <person name="Denning D.W."/>
        </authorList>
    </citation>
    <scope>NUCLEOTIDE SEQUENCE [LARGE SCALE GENOMIC DNA]</scope>
    <source>
        <strain>ATCC MYA-4609 / CBS 101355 / FGSC A1100 / Af293</strain>
    </source>
</reference>
<reference key="2">
    <citation type="journal article" date="2012" name="Eukaryot. Cell">
        <title>Dsc orthologs are required for hypoxia adaptation, triazole drug responses, and fungal virulence in Aspergillus fumigatus.</title>
        <authorList>
            <person name="Willger S.D."/>
            <person name="Cornish E.J."/>
            <person name="Chung D."/>
            <person name="Fleming B.A."/>
            <person name="Lehmann M.M."/>
            <person name="Puttikamonkul S."/>
            <person name="Cramer R.A."/>
        </authorList>
    </citation>
    <scope>FUNCTION</scope>
    <scope>DISRUPTION PHENOTYPE</scope>
</reference>
<dbReference type="EC" id="2.3.2.27" evidence="8"/>
<dbReference type="EMBL" id="AAHF01000004">
    <property type="protein sequence ID" value="EAL90538.1"/>
    <property type="molecule type" value="Genomic_DNA"/>
</dbReference>
<dbReference type="RefSeq" id="XP_752576.1">
    <property type="nucleotide sequence ID" value="XM_747483.1"/>
</dbReference>
<dbReference type="FunCoup" id="E9QSG0">
    <property type="interactions" value="44"/>
</dbReference>
<dbReference type="STRING" id="330879.E9QSG0"/>
<dbReference type="EnsemblFungi" id="EAL90538">
    <property type="protein sequence ID" value="EAL90538"/>
    <property type="gene ID" value="AFUA_1G12080"/>
</dbReference>
<dbReference type="GeneID" id="3510626"/>
<dbReference type="KEGG" id="afm:AFUA_1G12080"/>
<dbReference type="VEuPathDB" id="FungiDB:Afu1g12080"/>
<dbReference type="eggNOG" id="KOG0828">
    <property type="taxonomic scope" value="Eukaryota"/>
</dbReference>
<dbReference type="HOGENOM" id="CLU_010475_0_0_1"/>
<dbReference type="InParanoid" id="E9QSG0"/>
<dbReference type="OMA" id="LEGWMRF"/>
<dbReference type="OrthoDB" id="9984778at2759"/>
<dbReference type="UniPathway" id="UPA00143"/>
<dbReference type="Proteomes" id="UP000002530">
    <property type="component" value="Chromosome 1"/>
</dbReference>
<dbReference type="GO" id="GO:0044695">
    <property type="term" value="C:Dsc E3 ubiquitin ligase complex"/>
    <property type="evidence" value="ECO:0000318"/>
    <property type="project" value="GO_Central"/>
</dbReference>
<dbReference type="GO" id="GO:0012505">
    <property type="term" value="C:endomembrane system"/>
    <property type="evidence" value="ECO:0000318"/>
    <property type="project" value="GO_Central"/>
</dbReference>
<dbReference type="GO" id="GO:0005789">
    <property type="term" value="C:endoplasmic reticulum membrane"/>
    <property type="evidence" value="ECO:0007669"/>
    <property type="project" value="UniProtKB-SubCell"/>
</dbReference>
<dbReference type="GO" id="GO:0061630">
    <property type="term" value="F:ubiquitin protein ligase activity"/>
    <property type="evidence" value="ECO:0000318"/>
    <property type="project" value="GO_Central"/>
</dbReference>
<dbReference type="GO" id="GO:0008270">
    <property type="term" value="F:zinc ion binding"/>
    <property type="evidence" value="ECO:0007669"/>
    <property type="project" value="UniProtKB-KW"/>
</dbReference>
<dbReference type="GO" id="GO:0043161">
    <property type="term" value="P:proteasome-mediated ubiquitin-dependent protein catabolic process"/>
    <property type="evidence" value="ECO:0000318"/>
    <property type="project" value="GO_Central"/>
</dbReference>
<dbReference type="GO" id="GO:0016567">
    <property type="term" value="P:protein ubiquitination"/>
    <property type="evidence" value="ECO:0007669"/>
    <property type="project" value="UniProtKB-UniPathway"/>
</dbReference>
<dbReference type="GO" id="GO:0051603">
    <property type="term" value="P:proteolysis involved in protein catabolic process"/>
    <property type="evidence" value="ECO:0000315"/>
    <property type="project" value="AspGD"/>
</dbReference>
<dbReference type="FunFam" id="3.30.40.10:FF:000626">
    <property type="entry name" value="Transmembrane ubiquitin ligase 1"/>
    <property type="match status" value="1"/>
</dbReference>
<dbReference type="Gene3D" id="3.30.40.10">
    <property type="entry name" value="Zinc/RING finger domain, C3HC4 (zinc finger)"/>
    <property type="match status" value="1"/>
</dbReference>
<dbReference type="InterPro" id="IPR021319">
    <property type="entry name" value="DUF2921"/>
</dbReference>
<dbReference type="InterPro" id="IPR050731">
    <property type="entry name" value="HRD1_E3_ubiq-ligases"/>
</dbReference>
<dbReference type="InterPro" id="IPR001841">
    <property type="entry name" value="Znf_RING"/>
</dbReference>
<dbReference type="InterPro" id="IPR013083">
    <property type="entry name" value="Znf_RING/FYVE/PHD"/>
</dbReference>
<dbReference type="PANTHER" id="PTHR22763">
    <property type="entry name" value="RING ZINC FINGER PROTEIN"/>
    <property type="match status" value="1"/>
</dbReference>
<dbReference type="PANTHER" id="PTHR22763:SF162">
    <property type="entry name" value="TRANSMEMBRANE E3 UBIQUITIN-PROTEIN LIGASE 1"/>
    <property type="match status" value="1"/>
</dbReference>
<dbReference type="Pfam" id="PF11145">
    <property type="entry name" value="DUF2921"/>
    <property type="match status" value="2"/>
</dbReference>
<dbReference type="Pfam" id="PF13639">
    <property type="entry name" value="zf-RING_2"/>
    <property type="match status" value="1"/>
</dbReference>
<dbReference type="SMART" id="SM00184">
    <property type="entry name" value="RING"/>
    <property type="match status" value="1"/>
</dbReference>
<dbReference type="SUPFAM" id="SSF57850">
    <property type="entry name" value="RING/U-box"/>
    <property type="match status" value="1"/>
</dbReference>
<dbReference type="PROSITE" id="PS50089">
    <property type="entry name" value="ZF_RING_2"/>
    <property type="match status" value="1"/>
</dbReference>
<keyword id="KW-0256">Endoplasmic reticulum</keyword>
<keyword id="KW-0325">Glycoprotein</keyword>
<keyword id="KW-0472">Membrane</keyword>
<keyword id="KW-0479">Metal-binding</keyword>
<keyword id="KW-1185">Reference proteome</keyword>
<keyword id="KW-0732">Signal</keyword>
<keyword id="KW-0808">Transferase</keyword>
<keyword id="KW-0812">Transmembrane</keyword>
<keyword id="KW-1133">Transmembrane helix</keyword>
<keyword id="KW-0833">Ubl conjugation pathway</keyword>
<keyword id="KW-0862">Zinc</keyword>
<keyword id="KW-0863">Zinc-finger</keyword>
<name>DSCA_ASPFU</name>
<gene>
    <name evidence="6" type="primary">dscA</name>
    <name type="ORF">AFUA_1G12080</name>
</gene>
<feature type="signal peptide" evidence="1">
    <location>
        <begin position="1"/>
        <end position="22"/>
    </location>
</feature>
<feature type="chain" id="PRO_5003243362" description="DSC E3 ubiquitin ligase complex subunit A">
    <location>
        <begin position="23"/>
        <end position="802"/>
    </location>
</feature>
<feature type="topological domain" description="Lumenal" evidence="7">
    <location>
        <begin position="23"/>
        <end position="381"/>
    </location>
</feature>
<feature type="transmembrane region" description="Helical" evidence="1">
    <location>
        <begin position="382"/>
        <end position="402"/>
    </location>
</feature>
<feature type="topological domain" description="Cytoplasmic" evidence="7">
    <location>
        <begin position="403"/>
        <end position="429"/>
    </location>
</feature>
<feature type="transmembrane region" description="Helical" evidence="1">
    <location>
        <begin position="430"/>
        <end position="450"/>
    </location>
</feature>
<feature type="topological domain" description="Lumenal" evidence="7">
    <location>
        <begin position="451"/>
        <end position="453"/>
    </location>
</feature>
<feature type="transmembrane region" description="Helical" evidence="1">
    <location>
        <begin position="454"/>
        <end position="474"/>
    </location>
</feature>
<feature type="topological domain" description="Cytoplasmic" evidence="7">
    <location>
        <begin position="475"/>
        <end position="550"/>
    </location>
</feature>
<feature type="transmembrane region" description="Helical" evidence="1">
    <location>
        <begin position="551"/>
        <end position="571"/>
    </location>
</feature>
<feature type="topological domain" description="Lumenal" evidence="7">
    <location>
        <begin position="572"/>
        <end position="574"/>
    </location>
</feature>
<feature type="transmembrane region" description="Helical" evidence="1">
    <location>
        <begin position="575"/>
        <end position="595"/>
    </location>
</feature>
<feature type="topological domain" description="Cytoplasmic" evidence="7">
    <location>
        <begin position="596"/>
        <end position="608"/>
    </location>
</feature>
<feature type="transmembrane region" description="Helical" evidence="1">
    <location>
        <begin position="609"/>
        <end position="629"/>
    </location>
</feature>
<feature type="topological domain" description="Lumenal" evidence="7">
    <location>
        <begin position="630"/>
        <end position="642"/>
    </location>
</feature>
<feature type="transmembrane region" description="Helical" evidence="1">
    <location>
        <begin position="643"/>
        <end position="663"/>
    </location>
</feature>
<feature type="topological domain" description="Cytoplasmic" evidence="7">
    <location>
        <begin position="664"/>
        <end position="802"/>
    </location>
</feature>
<feature type="zinc finger region" description="RING-type; atypical" evidence="2">
    <location>
        <begin position="732"/>
        <end position="796"/>
    </location>
</feature>
<feature type="region of interest" description="Disordered" evidence="4">
    <location>
        <begin position="478"/>
        <end position="541"/>
    </location>
</feature>
<feature type="compositionally biased region" description="Polar residues" evidence="4">
    <location>
        <begin position="532"/>
        <end position="541"/>
    </location>
</feature>
<feature type="glycosylation site" description="N-linked (GlcNAc...) asparagine" evidence="3">
    <location>
        <position position="48"/>
    </location>
</feature>
<feature type="glycosylation site" description="N-linked (GlcNAc...) asparagine" evidence="3">
    <location>
        <position position="71"/>
    </location>
</feature>
<feature type="glycosylation site" description="N-linked (GlcNAc...) asparagine" evidence="3">
    <location>
        <position position="115"/>
    </location>
</feature>
<feature type="glycosylation site" description="N-linked (GlcNAc...) asparagine" evidence="3">
    <location>
        <position position="126"/>
    </location>
</feature>
<feature type="glycosylation site" description="N-linked (GlcNAc...) asparagine" evidence="3">
    <location>
        <position position="148"/>
    </location>
</feature>
<feature type="glycosylation site" description="N-linked (GlcNAc...) asparagine" evidence="3">
    <location>
        <position position="166"/>
    </location>
</feature>
<accession>E9QSG0</accession>
<comment type="function">
    <text evidence="5">Catalytic component of the DSC E3 ubiquitin ligase complex which is required for the srbA transcriptional activator proteolytic cleavage to release the soluble transcription factor from the membrane in low oxygen or sterol conditions (PubMed:23104569). Required for growth during hypoxia and triazole drug susceptibility, as well as for virulence in a murine model of invasive pulmonary aspergillosis (IPA) (PubMed:23104569).</text>
</comment>
<comment type="catalytic activity">
    <reaction evidence="8">
        <text>S-ubiquitinyl-[E2 ubiquitin-conjugating enzyme]-L-cysteine + [acceptor protein]-L-lysine = [E2 ubiquitin-conjugating enzyme]-L-cysteine + N(6)-ubiquitinyl-[acceptor protein]-L-lysine.</text>
        <dbReference type="EC" id="2.3.2.27"/>
    </reaction>
</comment>
<comment type="pathway">
    <text evidence="8">Protein modification; protein ubiquitination.</text>
</comment>
<comment type="subunit">
    <text evidence="8">Component of the DSC E3 ubiquitin ligase complex composed of dscA, dscB, dscC and dscD.</text>
</comment>
<comment type="subcellular location">
    <subcellularLocation>
        <location evidence="8">Endoplasmic reticulum membrane</location>
        <topology evidence="1">Multi-pass membrane protein</topology>
    </subcellularLocation>
</comment>
<comment type="disruption phenotype">
    <text evidence="5">Impairs growth on solid media under hypoxia and leads to triazole susceptibility (PubMed:23104569). Impairs virulence in a murine model of invasive pulmonary aspergillosis (IPA) (PubMed:23104569).</text>
</comment>
<organism>
    <name type="scientific">Aspergillus fumigatus (strain ATCC MYA-4609 / CBS 101355 / FGSC A1100 / Af293)</name>
    <name type="common">Neosartorya fumigata</name>
    <dbReference type="NCBI Taxonomy" id="330879"/>
    <lineage>
        <taxon>Eukaryota</taxon>
        <taxon>Fungi</taxon>
        <taxon>Dikarya</taxon>
        <taxon>Ascomycota</taxon>
        <taxon>Pezizomycotina</taxon>
        <taxon>Eurotiomycetes</taxon>
        <taxon>Eurotiomycetidae</taxon>
        <taxon>Eurotiales</taxon>
        <taxon>Aspergillaceae</taxon>
        <taxon>Aspergillus</taxon>
        <taxon>Aspergillus subgen. Fumigati</taxon>
    </lineage>
</organism>
<proteinExistence type="inferred from homology"/>